<reference key="1">
    <citation type="journal article" date="2002" name="Biochem. Biophys. Res. Commun.">
        <title>Isolation and characterization of a novel F-box protein Pof10 in fission yeast.</title>
        <authorList>
            <person name="Ikebe C."/>
            <person name="Kominami K."/>
            <person name="Toda T."/>
            <person name="Nakayama K."/>
        </authorList>
    </citation>
    <scope>NUCLEOTIDE SEQUENCE [GENOMIC DNA]</scope>
    <scope>INTERACTION WITH SKP1</scope>
    <scope>SUBCELLULAR LOCATION</scope>
</reference>
<reference key="2">
    <citation type="journal article" date="2002" name="Nature">
        <title>The genome sequence of Schizosaccharomyces pombe.</title>
        <authorList>
            <person name="Wood V."/>
            <person name="Gwilliam R."/>
            <person name="Rajandream M.A."/>
            <person name="Lyne M.H."/>
            <person name="Lyne R."/>
            <person name="Stewart A."/>
            <person name="Sgouros J.G."/>
            <person name="Peat N."/>
            <person name="Hayles J."/>
            <person name="Baker S.G."/>
            <person name="Basham D."/>
            <person name="Bowman S."/>
            <person name="Brooks K."/>
            <person name="Brown D."/>
            <person name="Brown S."/>
            <person name="Chillingworth T."/>
            <person name="Churcher C.M."/>
            <person name="Collins M."/>
            <person name="Connor R."/>
            <person name="Cronin A."/>
            <person name="Davis P."/>
            <person name="Feltwell T."/>
            <person name="Fraser A."/>
            <person name="Gentles S."/>
            <person name="Goble A."/>
            <person name="Hamlin N."/>
            <person name="Harris D.E."/>
            <person name="Hidalgo J."/>
            <person name="Hodgson G."/>
            <person name="Holroyd S."/>
            <person name="Hornsby T."/>
            <person name="Howarth S."/>
            <person name="Huckle E.J."/>
            <person name="Hunt S."/>
            <person name="Jagels K."/>
            <person name="James K.D."/>
            <person name="Jones L."/>
            <person name="Jones M."/>
            <person name="Leather S."/>
            <person name="McDonald S."/>
            <person name="McLean J."/>
            <person name="Mooney P."/>
            <person name="Moule S."/>
            <person name="Mungall K.L."/>
            <person name="Murphy L.D."/>
            <person name="Niblett D."/>
            <person name="Odell C."/>
            <person name="Oliver K."/>
            <person name="O'Neil S."/>
            <person name="Pearson D."/>
            <person name="Quail M.A."/>
            <person name="Rabbinowitsch E."/>
            <person name="Rutherford K.M."/>
            <person name="Rutter S."/>
            <person name="Saunders D."/>
            <person name="Seeger K."/>
            <person name="Sharp S."/>
            <person name="Skelton J."/>
            <person name="Simmonds M.N."/>
            <person name="Squares R."/>
            <person name="Squares S."/>
            <person name="Stevens K."/>
            <person name="Taylor K."/>
            <person name="Taylor R.G."/>
            <person name="Tivey A."/>
            <person name="Walsh S.V."/>
            <person name="Warren T."/>
            <person name="Whitehead S."/>
            <person name="Woodward J.R."/>
            <person name="Volckaert G."/>
            <person name="Aert R."/>
            <person name="Robben J."/>
            <person name="Grymonprez B."/>
            <person name="Weltjens I."/>
            <person name="Vanstreels E."/>
            <person name="Rieger M."/>
            <person name="Schaefer M."/>
            <person name="Mueller-Auer S."/>
            <person name="Gabel C."/>
            <person name="Fuchs M."/>
            <person name="Duesterhoeft A."/>
            <person name="Fritzc C."/>
            <person name="Holzer E."/>
            <person name="Moestl D."/>
            <person name="Hilbert H."/>
            <person name="Borzym K."/>
            <person name="Langer I."/>
            <person name="Beck A."/>
            <person name="Lehrach H."/>
            <person name="Reinhardt R."/>
            <person name="Pohl T.M."/>
            <person name="Eger P."/>
            <person name="Zimmermann W."/>
            <person name="Wedler H."/>
            <person name="Wambutt R."/>
            <person name="Purnelle B."/>
            <person name="Goffeau A."/>
            <person name="Cadieu E."/>
            <person name="Dreano S."/>
            <person name="Gloux S."/>
            <person name="Lelaure V."/>
            <person name="Mottier S."/>
            <person name="Galibert F."/>
            <person name="Aves S.J."/>
            <person name="Xiang Z."/>
            <person name="Hunt C."/>
            <person name="Moore K."/>
            <person name="Hurst S.M."/>
            <person name="Lucas M."/>
            <person name="Rochet M."/>
            <person name="Gaillardin C."/>
            <person name="Tallada V.A."/>
            <person name="Garzon A."/>
            <person name="Thode G."/>
            <person name="Daga R.R."/>
            <person name="Cruzado L."/>
            <person name="Jimenez J."/>
            <person name="Sanchez M."/>
            <person name="del Rey F."/>
            <person name="Benito J."/>
            <person name="Dominguez A."/>
            <person name="Revuelta J.L."/>
            <person name="Moreno S."/>
            <person name="Armstrong J."/>
            <person name="Forsburg S.L."/>
            <person name="Cerutti L."/>
            <person name="Lowe T."/>
            <person name="McCombie W.R."/>
            <person name="Paulsen I."/>
            <person name="Potashkin J."/>
            <person name="Shpakovski G.V."/>
            <person name="Ussery D."/>
            <person name="Barrell B.G."/>
            <person name="Nurse P."/>
        </authorList>
    </citation>
    <scope>NUCLEOTIDE SEQUENCE [LARGE SCALE GENOMIC DNA]</scope>
    <source>
        <strain>972 / ATCC 24843</strain>
    </source>
</reference>
<reference key="3">
    <citation type="journal article" date="2004" name="Genes Cells">
        <title>Molecular interactions of fission yeast Skp1 and its role in the DNA damage checkpoint.</title>
        <authorList>
            <person name="Lehmann A."/>
            <person name="Katayama S."/>
            <person name="Harrison C."/>
            <person name="Dhut S."/>
            <person name="Kitamura K."/>
            <person name="McDonald N."/>
            <person name="Toda T."/>
        </authorList>
    </citation>
    <scope>INTERACTION WITH SKP1</scope>
</reference>
<reference key="4">
    <citation type="journal article" date="2006" name="Nat. Biotechnol.">
        <title>ORFeome cloning and global analysis of protein localization in the fission yeast Schizosaccharomyces pombe.</title>
        <authorList>
            <person name="Matsuyama A."/>
            <person name="Arai R."/>
            <person name="Yashiroda Y."/>
            <person name="Shirai A."/>
            <person name="Kamata A."/>
            <person name="Sekido S."/>
            <person name="Kobayashi Y."/>
            <person name="Hashimoto A."/>
            <person name="Hamamoto M."/>
            <person name="Hiraoka Y."/>
            <person name="Horinouchi S."/>
            <person name="Yoshida M."/>
        </authorList>
    </citation>
    <scope>SUBCELLULAR LOCATION [LARGE SCALE ANALYSIS]</scope>
</reference>
<name>POF10_SCHPO</name>
<comment type="function">
    <text>Probably recognizes and binds to some phosphorylated proteins and promotes their ubiquitination and degradation.</text>
</comment>
<comment type="subunit">
    <text evidence="1 5 6">Part of a SCF (SKP1-cullin-F-box) protein ligase complex (By similarity). Interacts with skp1.</text>
</comment>
<comment type="interaction">
    <interactant intactId="EBI-908406">
        <id>Q9P7W4</id>
    </interactant>
    <interactant intactId="EBI-1172248">
        <id>Q9Y709</id>
        <label>skp1</label>
    </interactant>
    <organismsDiffer>false</organismsDiffer>
    <experiments>5</experiments>
</comment>
<comment type="subcellular location">
    <subcellularLocation>
        <location evidence="5 7">Cytoplasm</location>
    </subcellularLocation>
</comment>
<dbReference type="EMBL" id="AB061725">
    <property type="protein sequence ID" value="BAB55636.1"/>
    <property type="molecule type" value="Genomic_DNA"/>
</dbReference>
<dbReference type="EMBL" id="CU329671">
    <property type="protein sequence ID" value="CAB66450.1"/>
    <property type="molecule type" value="Genomic_DNA"/>
</dbReference>
<dbReference type="PIR" id="T50319">
    <property type="entry name" value="T50319"/>
</dbReference>
<dbReference type="RefSeq" id="NP_596201.1">
    <property type="nucleotide sequence ID" value="NM_001022120.2"/>
</dbReference>
<dbReference type="SMR" id="Q9P7W4"/>
<dbReference type="BioGRID" id="276318">
    <property type="interactions" value="19"/>
</dbReference>
<dbReference type="FunCoup" id="Q9P7W4">
    <property type="interactions" value="187"/>
</dbReference>
<dbReference type="IntAct" id="Q9P7W4">
    <property type="interactions" value="1"/>
</dbReference>
<dbReference type="MINT" id="Q9P7W4"/>
<dbReference type="STRING" id="284812.Q9P7W4"/>
<dbReference type="iPTMnet" id="Q9P7W4"/>
<dbReference type="PaxDb" id="4896-SPBC1703.06.1"/>
<dbReference type="EnsemblFungi" id="SPBC1703.06.1">
    <property type="protein sequence ID" value="SPBC1703.06.1:pep"/>
    <property type="gene ID" value="SPBC1703.06"/>
</dbReference>
<dbReference type="GeneID" id="2539767"/>
<dbReference type="KEGG" id="spo:2539767"/>
<dbReference type="PomBase" id="SPBC1703.06">
    <property type="gene designation" value="pof10"/>
</dbReference>
<dbReference type="VEuPathDB" id="FungiDB:SPBC1703.06"/>
<dbReference type="eggNOG" id="KOG0274">
    <property type="taxonomic scope" value="Eukaryota"/>
</dbReference>
<dbReference type="HOGENOM" id="CLU_414556_0_0_1"/>
<dbReference type="InParanoid" id="Q9P7W4"/>
<dbReference type="OMA" id="NTHAMCA"/>
<dbReference type="PhylomeDB" id="Q9P7W4"/>
<dbReference type="Reactome" id="R-SPO-9907900">
    <property type="pathway name" value="Proteasome assembly"/>
</dbReference>
<dbReference type="PRO" id="PR:Q9P7W4"/>
<dbReference type="Proteomes" id="UP000002485">
    <property type="component" value="Chromosome II"/>
</dbReference>
<dbReference type="GO" id="GO:0005737">
    <property type="term" value="C:cytoplasm"/>
    <property type="evidence" value="ECO:0000314"/>
    <property type="project" value="PomBase"/>
</dbReference>
<dbReference type="GO" id="GO:0005829">
    <property type="term" value="C:cytosol"/>
    <property type="evidence" value="ECO:0007005"/>
    <property type="project" value="PomBase"/>
</dbReference>
<dbReference type="GO" id="GO:0005634">
    <property type="term" value="C:nucleus"/>
    <property type="evidence" value="ECO:0000318"/>
    <property type="project" value="GO_Central"/>
</dbReference>
<dbReference type="GO" id="GO:0000151">
    <property type="term" value="C:ubiquitin ligase complex"/>
    <property type="evidence" value="ECO:0000255"/>
    <property type="project" value="PomBase"/>
</dbReference>
<dbReference type="GO" id="GO:1990756">
    <property type="term" value="F:ubiquitin-like ligase-substrate adaptor activity"/>
    <property type="evidence" value="ECO:0000255"/>
    <property type="project" value="PomBase"/>
</dbReference>
<dbReference type="GO" id="GO:0031146">
    <property type="term" value="P:SCF-dependent proteasomal ubiquitin-dependent protein catabolic process"/>
    <property type="evidence" value="ECO:0000250"/>
    <property type="project" value="PomBase"/>
</dbReference>
<dbReference type="CDD" id="cd09917">
    <property type="entry name" value="F-box_SF"/>
    <property type="match status" value="1"/>
</dbReference>
<dbReference type="FunFam" id="1.20.1280.50:FF:000111">
    <property type="entry name" value="F-box and WD domain protein"/>
    <property type="match status" value="1"/>
</dbReference>
<dbReference type="Gene3D" id="1.20.1280.50">
    <property type="match status" value="1"/>
</dbReference>
<dbReference type="Gene3D" id="2.130.10.10">
    <property type="entry name" value="YVTN repeat-like/Quinoprotein amine dehydrogenase"/>
    <property type="match status" value="1"/>
</dbReference>
<dbReference type="InterPro" id="IPR036047">
    <property type="entry name" value="F-box-like_dom_sf"/>
</dbReference>
<dbReference type="InterPro" id="IPR001810">
    <property type="entry name" value="F-box_dom"/>
</dbReference>
<dbReference type="InterPro" id="IPR003903">
    <property type="entry name" value="UIM_dom"/>
</dbReference>
<dbReference type="InterPro" id="IPR015943">
    <property type="entry name" value="WD40/YVTN_repeat-like_dom_sf"/>
</dbReference>
<dbReference type="InterPro" id="IPR036322">
    <property type="entry name" value="WD40_repeat_dom_sf"/>
</dbReference>
<dbReference type="InterPro" id="IPR001680">
    <property type="entry name" value="WD40_rpt"/>
</dbReference>
<dbReference type="PANTHER" id="PTHR12874:SF9">
    <property type="entry name" value="F-BOX ONLY PROTEIN 48"/>
    <property type="match status" value="1"/>
</dbReference>
<dbReference type="PANTHER" id="PTHR12874">
    <property type="entry name" value="F-BOX ONLY PROTEIN 48-RELATED"/>
    <property type="match status" value="1"/>
</dbReference>
<dbReference type="Pfam" id="PF12937">
    <property type="entry name" value="F-box-like"/>
    <property type="match status" value="1"/>
</dbReference>
<dbReference type="Pfam" id="PF00400">
    <property type="entry name" value="WD40"/>
    <property type="match status" value="1"/>
</dbReference>
<dbReference type="SMART" id="SM00256">
    <property type="entry name" value="FBOX"/>
    <property type="match status" value="1"/>
</dbReference>
<dbReference type="SUPFAM" id="SSF81383">
    <property type="entry name" value="F-box domain"/>
    <property type="match status" value="1"/>
</dbReference>
<dbReference type="SUPFAM" id="SSF50978">
    <property type="entry name" value="WD40 repeat-like"/>
    <property type="match status" value="1"/>
</dbReference>
<dbReference type="PROSITE" id="PS50181">
    <property type="entry name" value="FBOX"/>
    <property type="match status" value="1"/>
</dbReference>
<dbReference type="PROSITE" id="PS50330">
    <property type="entry name" value="UIM"/>
    <property type="match status" value="2"/>
</dbReference>
<dbReference type="PROSITE" id="PS50082">
    <property type="entry name" value="WD_REPEATS_2"/>
    <property type="match status" value="1"/>
</dbReference>
<dbReference type="PROSITE" id="PS50294">
    <property type="entry name" value="WD_REPEATS_REGION"/>
    <property type="match status" value="1"/>
</dbReference>
<evidence type="ECO:0000250" key="1"/>
<evidence type="ECO:0000255" key="2">
    <source>
        <dbReference type="PROSITE-ProRule" id="PRU00080"/>
    </source>
</evidence>
<evidence type="ECO:0000255" key="3">
    <source>
        <dbReference type="PROSITE-ProRule" id="PRU00213"/>
    </source>
</evidence>
<evidence type="ECO:0000256" key="4">
    <source>
        <dbReference type="SAM" id="MobiDB-lite"/>
    </source>
</evidence>
<evidence type="ECO:0000269" key="5">
    <source>
    </source>
</evidence>
<evidence type="ECO:0000269" key="6">
    <source>
    </source>
</evidence>
<evidence type="ECO:0000269" key="7">
    <source>
    </source>
</evidence>
<keyword id="KW-0963">Cytoplasm</keyword>
<keyword id="KW-1185">Reference proteome</keyword>
<keyword id="KW-0677">Repeat</keyword>
<keyword id="KW-0833">Ubl conjugation pathway</keyword>
<keyword id="KW-0853">WD repeat</keyword>
<proteinExistence type="evidence at protein level"/>
<accession>Q9P7W4</accession>
<protein>
    <recommendedName>
        <fullName>F-box/WD repeat-containing protein pof10</fullName>
    </recommendedName>
    <alternativeName>
        <fullName>Skp1-binding protein 2</fullName>
    </alternativeName>
</protein>
<sequence>MKSEPTSLDFTSSNLRRMNRDHSSNNTNRTVLNLPKEILIIIFSFLDPRSLLSAQCTCKYWKKLLSDDLSWRTAFFHHFAGDQSQIFSPLGNGTWRQEYLLRSTITRAYEKGKGQTVQYDCRVGQLTNLYYDFSSGRLYSGNWLTGTISVSDPTTGKVERSLLHASTDGSFTHGLSTMTLGKQIFGFGFMDGRVGVILMSRQAETPRKFRYCLDSHADSVTCIDALTGDLPPTGEIGMVTGSDDGSVHCWDVKTGVSLQSFQFRSSQILSLCFRPKYKMLLVDTFNYELNSYQLYLIPGYARSRKNEQPILLSSRKCVLTDEEEPPCLMTADCCAGVAFLSRGAPKNCICRVSFKEFLEKNDNVGVQTSSIPLNGKPTSISLDTNDRVLSKSTPGRGARLLAVGDENGLVYVVNTRTEDPNKAILRTITAYSNFPITDIYLNEVAMVVGSASGYCGVYDTVTGNFLKKIASARNAARREPINCILLDSNPLSLKGVITMSKHVKSWSYTIPKPFVNKRSKVLPLRPSVTHDNLSKSSDYSKNEVEREIMLGLDQIAQERREKMEARQKFEQHFGEGLVGLSEEEIIAYVTMLSQEEEAKRMVQLSMDVDKIEEDFKENDEQATSSLNALSSNHEPPQEQANVAELNEQEQIELAMRLSLMEM</sequence>
<organism>
    <name type="scientific">Schizosaccharomyces pombe (strain 972 / ATCC 24843)</name>
    <name type="common">Fission yeast</name>
    <dbReference type="NCBI Taxonomy" id="284812"/>
    <lineage>
        <taxon>Eukaryota</taxon>
        <taxon>Fungi</taxon>
        <taxon>Dikarya</taxon>
        <taxon>Ascomycota</taxon>
        <taxon>Taphrinomycotina</taxon>
        <taxon>Schizosaccharomycetes</taxon>
        <taxon>Schizosaccharomycetales</taxon>
        <taxon>Schizosaccharomycetaceae</taxon>
        <taxon>Schizosaccharomyces</taxon>
    </lineage>
</organism>
<gene>
    <name type="primary">pof10</name>
    <name type="synonym">sbp2</name>
    <name type="ORF">SPBC1703.06</name>
</gene>
<feature type="chain" id="PRO_0000051137" description="F-box/WD repeat-containing protein pof10">
    <location>
        <begin position="1"/>
        <end position="662"/>
    </location>
</feature>
<feature type="domain" description="F-box" evidence="2">
    <location>
        <begin position="28"/>
        <end position="74"/>
    </location>
</feature>
<feature type="repeat" description="WD 1">
    <location>
        <begin position="215"/>
        <end position="260"/>
    </location>
</feature>
<feature type="repeat" description="WD 2">
    <location>
        <begin position="263"/>
        <end position="302"/>
    </location>
</feature>
<feature type="repeat" description="WD 3">
    <location>
        <begin position="429"/>
        <end position="468"/>
    </location>
</feature>
<feature type="domain" description="UIM 1" evidence="3">
    <location>
        <begin position="581"/>
        <end position="600"/>
    </location>
</feature>
<feature type="domain" description="UIM 2" evidence="3">
    <location>
        <begin position="646"/>
        <end position="662"/>
    </location>
</feature>
<feature type="region of interest" description="Disordered" evidence="4">
    <location>
        <begin position="1"/>
        <end position="27"/>
    </location>
</feature>
<feature type="region of interest" description="Disordered" evidence="4">
    <location>
        <begin position="617"/>
        <end position="645"/>
    </location>
</feature>
<feature type="compositionally biased region" description="Polar residues" evidence="4">
    <location>
        <begin position="1"/>
        <end position="16"/>
    </location>
</feature>
<feature type="compositionally biased region" description="Polar residues" evidence="4">
    <location>
        <begin position="621"/>
        <end position="640"/>
    </location>
</feature>